<reference key="1">
    <citation type="journal article" date="2006" name="Proc. Natl. Acad. Sci. U.S.A.">
        <title>Comparative genomics of the lactic acid bacteria.</title>
        <authorList>
            <person name="Makarova K.S."/>
            <person name="Slesarev A."/>
            <person name="Wolf Y.I."/>
            <person name="Sorokin A."/>
            <person name="Mirkin B."/>
            <person name="Koonin E.V."/>
            <person name="Pavlov A."/>
            <person name="Pavlova N."/>
            <person name="Karamychev V."/>
            <person name="Polouchine N."/>
            <person name="Shakhova V."/>
            <person name="Grigoriev I."/>
            <person name="Lou Y."/>
            <person name="Rohksar D."/>
            <person name="Lucas S."/>
            <person name="Huang K."/>
            <person name="Goodstein D.M."/>
            <person name="Hawkins T."/>
            <person name="Plengvidhya V."/>
            <person name="Welker D."/>
            <person name="Hughes J."/>
            <person name="Goh Y."/>
            <person name="Benson A."/>
            <person name="Baldwin K."/>
            <person name="Lee J.-H."/>
            <person name="Diaz-Muniz I."/>
            <person name="Dosti B."/>
            <person name="Smeianov V."/>
            <person name="Wechter W."/>
            <person name="Barabote R."/>
            <person name="Lorca G."/>
            <person name="Altermann E."/>
            <person name="Barrangou R."/>
            <person name="Ganesan B."/>
            <person name="Xie Y."/>
            <person name="Rawsthorne H."/>
            <person name="Tamir D."/>
            <person name="Parker C."/>
            <person name="Breidt F."/>
            <person name="Broadbent J.R."/>
            <person name="Hutkins R."/>
            <person name="O'Sullivan D."/>
            <person name="Steele J."/>
            <person name="Unlu G."/>
            <person name="Saier M.H. Jr."/>
            <person name="Klaenhammer T."/>
            <person name="Richardson P."/>
            <person name="Kozyavkin S."/>
            <person name="Weimer B.C."/>
            <person name="Mills D.A."/>
        </authorList>
    </citation>
    <scope>NUCLEOTIDE SEQUENCE [LARGE SCALE GENOMIC DNA]</scope>
    <source>
        <strain>ATCC BAA-491 / LMD-9</strain>
    </source>
</reference>
<comment type="function">
    <text evidence="1">The alpha subunit is responsible for the aldol cleavage of indoleglycerol phosphate to indole and glyceraldehyde 3-phosphate.</text>
</comment>
<comment type="catalytic activity">
    <reaction evidence="1">
        <text>(1S,2R)-1-C-(indol-3-yl)glycerol 3-phosphate + L-serine = D-glyceraldehyde 3-phosphate + L-tryptophan + H2O</text>
        <dbReference type="Rhea" id="RHEA:10532"/>
        <dbReference type="ChEBI" id="CHEBI:15377"/>
        <dbReference type="ChEBI" id="CHEBI:33384"/>
        <dbReference type="ChEBI" id="CHEBI:57912"/>
        <dbReference type="ChEBI" id="CHEBI:58866"/>
        <dbReference type="ChEBI" id="CHEBI:59776"/>
        <dbReference type="EC" id="4.2.1.20"/>
    </reaction>
</comment>
<comment type="pathway">
    <text evidence="1">Amino-acid biosynthesis; L-tryptophan biosynthesis; L-tryptophan from chorismate: step 5/5.</text>
</comment>
<comment type="subunit">
    <text evidence="1">Tetramer of two alpha and two beta chains.</text>
</comment>
<comment type="similarity">
    <text evidence="1">Belongs to the TrpA family.</text>
</comment>
<gene>
    <name evidence="1" type="primary">trpA</name>
    <name type="ordered locus">STER_1548</name>
</gene>
<evidence type="ECO:0000255" key="1">
    <source>
        <dbReference type="HAMAP-Rule" id="MF_00131"/>
    </source>
</evidence>
<proteinExistence type="inferred from homology"/>
<keyword id="KW-0028">Amino-acid biosynthesis</keyword>
<keyword id="KW-0057">Aromatic amino acid biosynthesis</keyword>
<keyword id="KW-0456">Lyase</keyword>
<keyword id="KW-0822">Tryptophan biosynthesis</keyword>
<name>TRPA_STRTD</name>
<organism>
    <name type="scientific">Streptococcus thermophilus (strain ATCC BAA-491 / LMD-9)</name>
    <dbReference type="NCBI Taxonomy" id="322159"/>
    <lineage>
        <taxon>Bacteria</taxon>
        <taxon>Bacillati</taxon>
        <taxon>Bacillota</taxon>
        <taxon>Bacilli</taxon>
        <taxon>Lactobacillales</taxon>
        <taxon>Streptococcaceae</taxon>
        <taxon>Streptococcus</taxon>
    </lineage>
</organism>
<dbReference type="EC" id="4.2.1.20" evidence="1"/>
<dbReference type="EMBL" id="CP000419">
    <property type="protein sequence ID" value="ABJ66700.1"/>
    <property type="molecule type" value="Genomic_DNA"/>
</dbReference>
<dbReference type="RefSeq" id="WP_011681515.1">
    <property type="nucleotide sequence ID" value="NC_008532.1"/>
</dbReference>
<dbReference type="SMR" id="Q03JC2"/>
<dbReference type="KEGG" id="ste:STER_1548"/>
<dbReference type="HOGENOM" id="CLU_016734_0_0_9"/>
<dbReference type="UniPathway" id="UPA00035">
    <property type="reaction ID" value="UER00044"/>
</dbReference>
<dbReference type="GO" id="GO:0005829">
    <property type="term" value="C:cytosol"/>
    <property type="evidence" value="ECO:0007669"/>
    <property type="project" value="TreeGrafter"/>
</dbReference>
<dbReference type="GO" id="GO:0004834">
    <property type="term" value="F:tryptophan synthase activity"/>
    <property type="evidence" value="ECO:0007669"/>
    <property type="project" value="UniProtKB-UniRule"/>
</dbReference>
<dbReference type="CDD" id="cd04724">
    <property type="entry name" value="Tryptophan_synthase_alpha"/>
    <property type="match status" value="1"/>
</dbReference>
<dbReference type="Gene3D" id="3.20.20.70">
    <property type="entry name" value="Aldolase class I"/>
    <property type="match status" value="1"/>
</dbReference>
<dbReference type="HAMAP" id="MF_00131">
    <property type="entry name" value="Trp_synth_alpha"/>
    <property type="match status" value="1"/>
</dbReference>
<dbReference type="InterPro" id="IPR013785">
    <property type="entry name" value="Aldolase_TIM"/>
</dbReference>
<dbReference type="InterPro" id="IPR011060">
    <property type="entry name" value="RibuloseP-bd_barrel"/>
</dbReference>
<dbReference type="InterPro" id="IPR018204">
    <property type="entry name" value="Trp_synthase_alpha_AS"/>
</dbReference>
<dbReference type="InterPro" id="IPR002028">
    <property type="entry name" value="Trp_synthase_suA"/>
</dbReference>
<dbReference type="NCBIfam" id="TIGR00262">
    <property type="entry name" value="trpA"/>
    <property type="match status" value="1"/>
</dbReference>
<dbReference type="PANTHER" id="PTHR43406:SF1">
    <property type="entry name" value="TRYPTOPHAN SYNTHASE ALPHA CHAIN, CHLOROPLASTIC"/>
    <property type="match status" value="1"/>
</dbReference>
<dbReference type="PANTHER" id="PTHR43406">
    <property type="entry name" value="TRYPTOPHAN SYNTHASE, ALPHA CHAIN"/>
    <property type="match status" value="1"/>
</dbReference>
<dbReference type="Pfam" id="PF00290">
    <property type="entry name" value="Trp_syntA"/>
    <property type="match status" value="1"/>
</dbReference>
<dbReference type="SUPFAM" id="SSF51366">
    <property type="entry name" value="Ribulose-phoshate binding barrel"/>
    <property type="match status" value="1"/>
</dbReference>
<dbReference type="PROSITE" id="PS00167">
    <property type="entry name" value="TRP_SYNTHASE_ALPHA"/>
    <property type="match status" value="1"/>
</dbReference>
<sequence length="260" mass="28361">MTKTLTKHLQAIKDSKRGIFVPYIMAGDHAKGLDGLFETITLLENSGVSAIEVGIPWSDPVADGTIIELAGQRSLAKDVTLTAIIKKLQEKKTQVPLVIMTYINPVYQYGIEAFVKDLAETSVKGLIIPDLPNEHADFITPYLRDSDIALVPLVSLTTGIDRQKQLIDGAEGFIYAVAINGVTGKTGNYRDDLDKHLSNLTAYADIPVLTGFGVSTEEDIKRFNAVSDGVIVGSKIVRDLHDGKEEEVAEFVTFGSHFEK</sequence>
<protein>
    <recommendedName>
        <fullName evidence="1">Tryptophan synthase alpha chain</fullName>
        <ecNumber evidence="1">4.2.1.20</ecNumber>
    </recommendedName>
</protein>
<feature type="chain" id="PRO_1000018296" description="Tryptophan synthase alpha chain">
    <location>
        <begin position="1"/>
        <end position="260"/>
    </location>
</feature>
<feature type="active site" description="Proton acceptor" evidence="1">
    <location>
        <position position="52"/>
    </location>
</feature>
<feature type="active site" description="Proton acceptor" evidence="1">
    <location>
        <position position="63"/>
    </location>
</feature>
<accession>Q03JC2</accession>